<evidence type="ECO:0000255" key="1">
    <source>
        <dbReference type="HAMAP-Rule" id="MF_00539"/>
    </source>
</evidence>
<evidence type="ECO:0000305" key="2"/>
<comment type="similarity">
    <text evidence="1">Belongs to the bacterial ribosomal protein bL27 family.</text>
</comment>
<feature type="chain" id="PRO_1000146557" description="Large ribosomal subunit protein bL27">
    <location>
        <begin position="1"/>
        <end position="83"/>
    </location>
</feature>
<dbReference type="EMBL" id="CP000916">
    <property type="protein sequence ID" value="ACM23213.1"/>
    <property type="molecule type" value="Genomic_DNA"/>
</dbReference>
<dbReference type="RefSeq" id="WP_015919529.1">
    <property type="nucleotide sequence ID" value="NC_011978.1"/>
</dbReference>
<dbReference type="SMR" id="B9K8D0"/>
<dbReference type="STRING" id="309803.CTN_1037"/>
<dbReference type="KEGG" id="tna:CTN_1037"/>
<dbReference type="eggNOG" id="COG0211">
    <property type="taxonomic scope" value="Bacteria"/>
</dbReference>
<dbReference type="HOGENOM" id="CLU_095424_4_1_0"/>
<dbReference type="Proteomes" id="UP000000445">
    <property type="component" value="Chromosome"/>
</dbReference>
<dbReference type="GO" id="GO:0022625">
    <property type="term" value="C:cytosolic large ribosomal subunit"/>
    <property type="evidence" value="ECO:0007669"/>
    <property type="project" value="TreeGrafter"/>
</dbReference>
<dbReference type="GO" id="GO:0003735">
    <property type="term" value="F:structural constituent of ribosome"/>
    <property type="evidence" value="ECO:0007669"/>
    <property type="project" value="InterPro"/>
</dbReference>
<dbReference type="GO" id="GO:0006412">
    <property type="term" value="P:translation"/>
    <property type="evidence" value="ECO:0007669"/>
    <property type="project" value="UniProtKB-UniRule"/>
</dbReference>
<dbReference type="FunFam" id="2.40.50.100:FF:000085">
    <property type="entry name" value="50S ribosomal protein L27"/>
    <property type="match status" value="1"/>
</dbReference>
<dbReference type="Gene3D" id="2.40.50.100">
    <property type="match status" value="1"/>
</dbReference>
<dbReference type="HAMAP" id="MF_00539">
    <property type="entry name" value="Ribosomal_bL27"/>
    <property type="match status" value="1"/>
</dbReference>
<dbReference type="InterPro" id="IPR001684">
    <property type="entry name" value="Ribosomal_bL27"/>
</dbReference>
<dbReference type="InterPro" id="IPR018261">
    <property type="entry name" value="Ribosomal_bL27_CS"/>
</dbReference>
<dbReference type="NCBIfam" id="TIGR00062">
    <property type="entry name" value="L27"/>
    <property type="match status" value="1"/>
</dbReference>
<dbReference type="PANTHER" id="PTHR15893:SF0">
    <property type="entry name" value="LARGE RIBOSOMAL SUBUNIT PROTEIN BL27M"/>
    <property type="match status" value="1"/>
</dbReference>
<dbReference type="PANTHER" id="PTHR15893">
    <property type="entry name" value="RIBOSOMAL PROTEIN L27"/>
    <property type="match status" value="1"/>
</dbReference>
<dbReference type="Pfam" id="PF01016">
    <property type="entry name" value="Ribosomal_L27"/>
    <property type="match status" value="1"/>
</dbReference>
<dbReference type="PRINTS" id="PR00063">
    <property type="entry name" value="RIBOSOMALL27"/>
</dbReference>
<dbReference type="SUPFAM" id="SSF110324">
    <property type="entry name" value="Ribosomal L27 protein-like"/>
    <property type="match status" value="1"/>
</dbReference>
<dbReference type="PROSITE" id="PS00831">
    <property type="entry name" value="RIBOSOMAL_L27"/>
    <property type="match status" value="1"/>
</dbReference>
<reference key="1">
    <citation type="submission" date="2007-11" db="EMBL/GenBank/DDBJ databases">
        <title>The genome sequence of the hyperthermophilic bacterium Thermotoga neapolitana.</title>
        <authorList>
            <person name="Lim S.K."/>
            <person name="Kim J.S."/>
            <person name="Cha S.H."/>
            <person name="Park B.C."/>
            <person name="Lee D.S."/>
            <person name="Tae H.S."/>
            <person name="Kim S.-J."/>
            <person name="Kim J.J."/>
            <person name="Park K.J."/>
            <person name="Lee S.Y."/>
        </authorList>
    </citation>
    <scope>NUCLEOTIDE SEQUENCE [LARGE SCALE GENOMIC DNA]</scope>
    <source>
        <strain>ATCC 49049 / DSM 4359 / NBRC 107923 / NS-E</strain>
    </source>
</reference>
<proteinExistence type="inferred from homology"/>
<name>RL27_THENN</name>
<keyword id="KW-0687">Ribonucleoprotein</keyword>
<keyword id="KW-0689">Ribosomal protein</keyword>
<protein>
    <recommendedName>
        <fullName evidence="1">Large ribosomal subunit protein bL27</fullName>
    </recommendedName>
    <alternativeName>
        <fullName evidence="2">50S ribosomal protein L27</fullName>
    </alternativeName>
</protein>
<sequence>MAHKKSGGVAKNGRDSLPKYLGVKVGDGQFVKAGNILVRQRGTRFHPGKNVGMGRDFTLFALKDGRVKFEQKNNKKYVSVYEE</sequence>
<accession>B9K8D0</accession>
<organism>
    <name type="scientific">Thermotoga neapolitana (strain ATCC 49049 / DSM 4359 / NBRC 107923 / NS-E)</name>
    <dbReference type="NCBI Taxonomy" id="309803"/>
    <lineage>
        <taxon>Bacteria</taxon>
        <taxon>Thermotogati</taxon>
        <taxon>Thermotogota</taxon>
        <taxon>Thermotogae</taxon>
        <taxon>Thermotogales</taxon>
        <taxon>Thermotogaceae</taxon>
        <taxon>Thermotoga</taxon>
    </lineage>
</organism>
<gene>
    <name evidence="1" type="primary">rpmA</name>
    <name type="ordered locus">CTN_1037</name>
</gene>